<feature type="chain" id="PRO_0000109470" description="tRNA-splicing endonuclease">
    <location>
        <begin position="1"/>
        <end position="179"/>
    </location>
</feature>
<feature type="active site">
    <location>
        <position position="115"/>
    </location>
</feature>
<feature type="active site">
    <location>
        <position position="125"/>
    </location>
</feature>
<feature type="active site">
    <location>
        <position position="156"/>
    </location>
</feature>
<feature type="mutagenesis site" description="Induces a strong decrease in activity." evidence="1">
    <original>H</original>
    <variation>A</variation>
    <location>
        <position position="125"/>
    </location>
</feature>
<feature type="strand" evidence="3">
    <location>
        <begin position="10"/>
        <end position="15"/>
    </location>
</feature>
<feature type="strand" evidence="3">
    <location>
        <begin position="18"/>
        <end position="21"/>
    </location>
</feature>
<feature type="helix" evidence="3">
    <location>
        <begin position="24"/>
        <end position="32"/>
    </location>
</feature>
<feature type="strand" evidence="3">
    <location>
        <begin position="36"/>
        <end position="38"/>
    </location>
</feature>
<feature type="strand" evidence="3">
    <location>
        <begin position="43"/>
        <end position="46"/>
    </location>
</feature>
<feature type="helix" evidence="3">
    <location>
        <begin position="47"/>
        <end position="55"/>
    </location>
</feature>
<feature type="strand" evidence="3">
    <location>
        <begin position="59"/>
        <end position="62"/>
    </location>
</feature>
<feature type="strand" evidence="3">
    <location>
        <begin position="64"/>
        <end position="67"/>
    </location>
</feature>
<feature type="helix" evidence="3">
    <location>
        <begin position="71"/>
        <end position="81"/>
    </location>
</feature>
<feature type="helix" evidence="3">
    <location>
        <begin position="85"/>
        <end position="97"/>
    </location>
</feature>
<feature type="strand" evidence="3">
    <location>
        <begin position="101"/>
        <end position="104"/>
    </location>
</feature>
<feature type="helix" evidence="3">
    <location>
        <begin position="106"/>
        <end position="108"/>
    </location>
</feature>
<feature type="strand" evidence="3">
    <location>
        <begin position="110"/>
        <end position="115"/>
    </location>
</feature>
<feature type="turn" evidence="3">
    <location>
        <begin position="121"/>
        <end position="123"/>
    </location>
</feature>
<feature type="strand" evidence="3">
    <location>
        <begin position="127"/>
        <end position="134"/>
    </location>
</feature>
<feature type="strand" evidence="3">
    <location>
        <begin position="137"/>
        <end position="139"/>
    </location>
</feature>
<feature type="helix" evidence="3">
    <location>
        <begin position="142"/>
        <end position="153"/>
    </location>
</feature>
<feature type="strand" evidence="3">
    <location>
        <begin position="157"/>
        <end position="163"/>
    </location>
</feature>
<feature type="strand" evidence="3">
    <location>
        <begin position="169"/>
        <end position="177"/>
    </location>
</feature>
<sequence length="179" mass="20664">MVRDKMGKKITGLLDGDRVIVFDKNGISKLSARHYGNVEGNFLSLSLVEALYLINLGWLEVKYKDNKPLSFEELYEYARNVEERLCLKYLVYKDLRTRGYIVKTGLKYGADFRLYERGANIDKEHSVYLVKVFPEDSSFLLSELTGFVRVAHSVRKKLLIAIVDADGDIVYYNMTYVKP</sequence>
<accession>Q58819</accession>
<protein>
    <recommendedName>
        <fullName>tRNA-splicing endonuclease</fullName>
        <ecNumber>4.6.1.16</ecNumber>
    </recommendedName>
    <alternativeName>
        <fullName>tRNA-intron endonuclease</fullName>
    </alternativeName>
</protein>
<name>ENDA_METJA</name>
<comment type="function">
    <text evidence="1">Endonuclease that removes tRNA introns. Cleaves pre-tRNA at the 5'- and 3'-splice sites to release the intron. The products are an intron and two tRNA half-molecules bearing 2',3' cyclic phosphate and 5'-OH termini. Recognizes a pseudosymmetric substrate in which 2 bulged loops of 3 bases are separated by a stem of 4 bp.</text>
</comment>
<comment type="catalytic activity">
    <reaction>
        <text>pretRNA = a 3'-half-tRNA molecule with a 5'-OH end + a 5'-half-tRNA molecule with a 2',3'-cyclic phosphate end + an intron with a 2',3'-cyclic phosphate and a 5'-hydroxyl terminus.</text>
        <dbReference type="EC" id="4.6.1.16"/>
    </reaction>
</comment>
<comment type="subunit">
    <text evidence="1">Homotetramer; although the tetramer contains four active sites, only two participate in the cleavage. Therefore, it should be considered as a dimer of dimers.</text>
</comment>
<comment type="similarity">
    <text evidence="2">Belongs to the tRNA-intron endonuclease family. Archaeal short subfamily.</text>
</comment>
<organism>
    <name type="scientific">Methanocaldococcus jannaschii (strain ATCC 43067 / DSM 2661 / JAL-1 / JCM 10045 / NBRC 100440)</name>
    <name type="common">Methanococcus jannaschii</name>
    <dbReference type="NCBI Taxonomy" id="243232"/>
    <lineage>
        <taxon>Archaea</taxon>
        <taxon>Methanobacteriati</taxon>
        <taxon>Methanobacteriota</taxon>
        <taxon>Methanomada group</taxon>
        <taxon>Methanococci</taxon>
        <taxon>Methanococcales</taxon>
        <taxon>Methanocaldococcaceae</taxon>
        <taxon>Methanocaldococcus</taxon>
    </lineage>
</organism>
<evidence type="ECO:0000269" key="1">
    <source>
    </source>
</evidence>
<evidence type="ECO:0000305" key="2"/>
<evidence type="ECO:0007829" key="3">
    <source>
        <dbReference type="PDB" id="1A79"/>
    </source>
</evidence>
<keyword id="KW-0002">3D-structure</keyword>
<keyword id="KW-0456">Lyase</keyword>
<keyword id="KW-1185">Reference proteome</keyword>
<keyword id="KW-0819">tRNA processing</keyword>
<proteinExistence type="evidence at protein level"/>
<reference key="1">
    <citation type="journal article" date="1996" name="Science">
        <title>Complete genome sequence of the methanogenic archaeon, Methanococcus jannaschii.</title>
        <authorList>
            <person name="Bult C.J."/>
            <person name="White O."/>
            <person name="Olsen G.J."/>
            <person name="Zhou L."/>
            <person name="Fleischmann R.D."/>
            <person name="Sutton G.G."/>
            <person name="Blake J.A."/>
            <person name="FitzGerald L.M."/>
            <person name="Clayton R.A."/>
            <person name="Gocayne J.D."/>
            <person name="Kerlavage A.R."/>
            <person name="Dougherty B.A."/>
            <person name="Tomb J.-F."/>
            <person name="Adams M.D."/>
            <person name="Reich C.I."/>
            <person name="Overbeek R."/>
            <person name="Kirkness E.F."/>
            <person name="Weinstock K.G."/>
            <person name="Merrick J.M."/>
            <person name="Glodek A."/>
            <person name="Scott J.L."/>
            <person name="Geoghagen N.S.M."/>
            <person name="Weidman J.F."/>
            <person name="Fuhrmann J.L."/>
            <person name="Nguyen D."/>
            <person name="Utterback T.R."/>
            <person name="Kelley J.M."/>
            <person name="Peterson J.D."/>
            <person name="Sadow P.W."/>
            <person name="Hanna M.C."/>
            <person name="Cotton M.D."/>
            <person name="Roberts K.M."/>
            <person name="Hurst M.A."/>
            <person name="Kaine B.P."/>
            <person name="Borodovsky M."/>
            <person name="Klenk H.-P."/>
            <person name="Fraser C.M."/>
            <person name="Smith H.O."/>
            <person name="Woese C.R."/>
            <person name="Venter J.C."/>
        </authorList>
    </citation>
    <scope>NUCLEOTIDE SEQUENCE [LARGE SCALE GENOMIC DNA]</scope>
    <source>
        <strain>ATCC 43067 / DSM 2661 / JAL-1 / JCM 10045 / NBRC 100440</strain>
    </source>
</reference>
<reference key="2">
    <citation type="journal article" date="1997" name="EMBO J.">
        <title>RNA-protein interactions of an archaeal homotetrameric splicing endoribonuclease with an exceptional evolutionary history.</title>
        <authorList>
            <person name="Lykke-Andersen J."/>
            <person name="Garrett R.A."/>
        </authorList>
    </citation>
    <scope>FUNCTION</scope>
    <scope>SUBUNIT</scope>
    <scope>MUTAGENESIS OF HIS-125</scope>
</reference>
<reference key="3">
    <citation type="journal article" date="1998" name="Science">
        <title>Crystal structure and evolution of a transfer RNA splicing enzyme.</title>
        <authorList>
            <person name="Li H."/>
            <person name="Trotta C.R."/>
            <person name="Abelson J."/>
        </authorList>
    </citation>
    <scope>X-RAY CRYSTALLOGRAPHY (2.3 ANGSTROMS)</scope>
</reference>
<dbReference type="EC" id="4.6.1.16"/>
<dbReference type="EMBL" id="L77117">
    <property type="protein sequence ID" value="AAB99435.1"/>
    <property type="molecule type" value="Genomic_DNA"/>
</dbReference>
<dbReference type="PIR" id="G64477">
    <property type="entry name" value="G64477"/>
</dbReference>
<dbReference type="PDB" id="1A79">
    <property type="method" value="X-ray"/>
    <property type="resolution" value="2.28 A"/>
    <property type="chains" value="A/B/C/D=9-179"/>
</dbReference>
<dbReference type="PDBsum" id="1A79"/>
<dbReference type="SMR" id="Q58819"/>
<dbReference type="STRING" id="243232.MJ_1424"/>
<dbReference type="PaxDb" id="243232-MJ_1424"/>
<dbReference type="EnsemblBacteria" id="AAB99435">
    <property type="protein sequence ID" value="AAB99435"/>
    <property type="gene ID" value="MJ_1424"/>
</dbReference>
<dbReference type="KEGG" id="mja:MJ_1424"/>
<dbReference type="eggNOG" id="arCOG01701">
    <property type="taxonomic scope" value="Archaea"/>
</dbReference>
<dbReference type="HOGENOM" id="CLU_114393_0_0_2"/>
<dbReference type="InParanoid" id="Q58819"/>
<dbReference type="PhylomeDB" id="Q58819"/>
<dbReference type="BRENDA" id="4.6.1.16">
    <property type="organism ID" value="3260"/>
</dbReference>
<dbReference type="EvolutionaryTrace" id="Q58819"/>
<dbReference type="Proteomes" id="UP000000805">
    <property type="component" value="Chromosome"/>
</dbReference>
<dbReference type="GO" id="GO:0005737">
    <property type="term" value="C:cytoplasm"/>
    <property type="evidence" value="ECO:0000318"/>
    <property type="project" value="GO_Central"/>
</dbReference>
<dbReference type="GO" id="GO:0004519">
    <property type="term" value="F:endonuclease activity"/>
    <property type="evidence" value="ECO:0000318"/>
    <property type="project" value="GO_Central"/>
</dbReference>
<dbReference type="GO" id="GO:0016829">
    <property type="term" value="F:lyase activity"/>
    <property type="evidence" value="ECO:0007669"/>
    <property type="project" value="UniProtKB-KW"/>
</dbReference>
<dbReference type="GO" id="GO:0003676">
    <property type="term" value="F:nucleic acid binding"/>
    <property type="evidence" value="ECO:0007669"/>
    <property type="project" value="InterPro"/>
</dbReference>
<dbReference type="GO" id="GO:0000213">
    <property type="term" value="F:tRNA-intron endonuclease activity"/>
    <property type="evidence" value="ECO:0007669"/>
    <property type="project" value="UniProtKB-UniRule"/>
</dbReference>
<dbReference type="GO" id="GO:0008033">
    <property type="term" value="P:tRNA processing"/>
    <property type="evidence" value="ECO:0000318"/>
    <property type="project" value="GO_Central"/>
</dbReference>
<dbReference type="GO" id="GO:0006388">
    <property type="term" value="P:tRNA splicing, via endonucleolytic cleavage and ligation"/>
    <property type="evidence" value="ECO:0007669"/>
    <property type="project" value="UniProtKB-UniRule"/>
</dbReference>
<dbReference type="CDD" id="cd22363">
    <property type="entry name" value="tRNA-intron_lyase_C"/>
    <property type="match status" value="1"/>
</dbReference>
<dbReference type="FunFam" id="3.40.1170.20:FF:000001">
    <property type="entry name" value="tRNA-splicing endonuclease"/>
    <property type="match status" value="1"/>
</dbReference>
<dbReference type="FunFam" id="3.40.1350.10:FF:000006">
    <property type="entry name" value="tRNA-splicing endonuclease"/>
    <property type="match status" value="1"/>
</dbReference>
<dbReference type="Gene3D" id="3.40.1350.10">
    <property type="match status" value="1"/>
</dbReference>
<dbReference type="Gene3D" id="3.40.1170.20">
    <property type="entry name" value="tRNA intron endonuclease, N-terminal domain"/>
    <property type="match status" value="1"/>
</dbReference>
<dbReference type="HAMAP" id="MF_01833">
    <property type="entry name" value="EndA_short"/>
    <property type="match status" value="1"/>
</dbReference>
<dbReference type="InterPro" id="IPR011856">
    <property type="entry name" value="tRNA_endonuc-like_dom_sf"/>
</dbReference>
<dbReference type="InterPro" id="IPR036167">
    <property type="entry name" value="tRNA_intron_Endo_cat-like_sf"/>
</dbReference>
<dbReference type="InterPro" id="IPR006677">
    <property type="entry name" value="tRNA_intron_Endonuc_cat-like"/>
</dbReference>
<dbReference type="InterPro" id="IPR006678">
    <property type="entry name" value="tRNA_intron_Endonuc_N"/>
</dbReference>
<dbReference type="InterPro" id="IPR036740">
    <property type="entry name" value="tRNA_intron_Endonuc_N_sf"/>
</dbReference>
<dbReference type="InterPro" id="IPR006676">
    <property type="entry name" value="tRNA_splic"/>
</dbReference>
<dbReference type="InterPro" id="IPR016442">
    <property type="entry name" value="tRNA_splic_arch_short"/>
</dbReference>
<dbReference type="NCBIfam" id="TIGR00324">
    <property type="entry name" value="endA"/>
    <property type="match status" value="1"/>
</dbReference>
<dbReference type="PANTHER" id="PTHR21227">
    <property type="entry name" value="TRNA-SPLICING ENDONUCLEASE SUBUNIT SEN2"/>
    <property type="match status" value="1"/>
</dbReference>
<dbReference type="PANTHER" id="PTHR21227:SF0">
    <property type="entry name" value="TRNA-SPLICING ENDONUCLEASE SUBUNIT SEN2"/>
    <property type="match status" value="1"/>
</dbReference>
<dbReference type="Pfam" id="PF01974">
    <property type="entry name" value="tRNA_int_endo"/>
    <property type="match status" value="1"/>
</dbReference>
<dbReference type="Pfam" id="PF02778">
    <property type="entry name" value="tRNA_int_endo_N"/>
    <property type="match status" value="1"/>
</dbReference>
<dbReference type="PIRSF" id="PIRSF005285">
    <property type="entry name" value="tRNA_splic_archaea"/>
    <property type="match status" value="1"/>
</dbReference>
<dbReference type="SUPFAM" id="SSF53032">
    <property type="entry name" value="tRNA-intron endonuclease catalytic domain-like"/>
    <property type="match status" value="1"/>
</dbReference>
<dbReference type="SUPFAM" id="SSF55267">
    <property type="entry name" value="tRNA-intron endonuclease N-terminal domain-like"/>
    <property type="match status" value="1"/>
</dbReference>
<gene>
    <name type="primary">endA</name>
    <name type="ordered locus">MJ1424</name>
</gene>